<accession>P21569</accession>
<name>CYPH_MAIZE</name>
<evidence type="ECO:0000255" key="1">
    <source>
        <dbReference type="PROSITE-ProRule" id="PRU00156"/>
    </source>
</evidence>
<evidence type="ECO:0000305" key="2"/>
<feature type="chain" id="PRO_0000064146" description="Peptidyl-prolyl cis-trans isomerase">
    <location>
        <begin position="1"/>
        <end position="172"/>
    </location>
</feature>
<feature type="domain" description="PPIase cyclophilin-type" evidence="1">
    <location>
        <begin position="7"/>
        <end position="170"/>
    </location>
</feature>
<organism>
    <name type="scientific">Zea mays</name>
    <name type="common">Maize</name>
    <dbReference type="NCBI Taxonomy" id="4577"/>
    <lineage>
        <taxon>Eukaryota</taxon>
        <taxon>Viridiplantae</taxon>
        <taxon>Streptophyta</taxon>
        <taxon>Embryophyta</taxon>
        <taxon>Tracheophyta</taxon>
        <taxon>Spermatophyta</taxon>
        <taxon>Magnoliopsida</taxon>
        <taxon>Liliopsida</taxon>
        <taxon>Poales</taxon>
        <taxon>Poaceae</taxon>
        <taxon>PACMAD clade</taxon>
        <taxon>Panicoideae</taxon>
        <taxon>Andropogonodae</taxon>
        <taxon>Andropogoneae</taxon>
        <taxon>Tripsacinae</taxon>
        <taxon>Zea</taxon>
    </lineage>
</organism>
<reference key="1">
    <citation type="journal article" date="1990" name="Proc. Natl. Acad. Sci. U.S.A.">
        <title>Structure and expression of cytosolic cyclophilin/peptidyl-prolyl cis-trans isomerase of higher plants and production of active tomato cyclophilin in Escherichia coli.</title>
        <authorList>
            <person name="Gasser C.S."/>
            <person name="Gunning D.A."/>
            <person name="Budelier K.A."/>
            <person name="Brown S.M."/>
        </authorList>
    </citation>
    <scope>NUCLEOTIDE SEQUENCE [MRNA]</scope>
</reference>
<reference key="2">
    <citation type="journal article" date="1995" name="Mol. Gen. Genet.">
        <title>DNA sequence analysis of a cyclophilin gene from maize: developmental expression and regulation by salicylic acid.</title>
        <authorList>
            <person name="Marivet J."/>
            <person name="Frendo P."/>
            <person name="Burkard G."/>
        </authorList>
    </citation>
    <scope>NUCLEOTIDE SEQUENCE [GENOMIC DNA]</scope>
</reference>
<comment type="function">
    <text>PPIases accelerate the folding of proteins. It catalyzes the cis-trans isomerization of proline imidic peptide bonds in oligopeptides.</text>
</comment>
<comment type="catalytic activity">
    <reaction>
        <text>[protein]-peptidylproline (omega=180) = [protein]-peptidylproline (omega=0)</text>
        <dbReference type="Rhea" id="RHEA:16237"/>
        <dbReference type="Rhea" id="RHEA-COMP:10747"/>
        <dbReference type="Rhea" id="RHEA-COMP:10748"/>
        <dbReference type="ChEBI" id="CHEBI:83833"/>
        <dbReference type="ChEBI" id="CHEBI:83834"/>
        <dbReference type="EC" id="5.2.1.8"/>
    </reaction>
</comment>
<comment type="activity regulation">
    <text>Binds cyclosporin A (CsA). CsA mediates some of its effects via an inhibitory action on PPIase.</text>
</comment>
<comment type="subcellular location">
    <subcellularLocation>
        <location>Cytoplasm</location>
    </subcellularLocation>
</comment>
<comment type="similarity">
    <text evidence="2">Belongs to the cyclophilin-type PPIase family.</text>
</comment>
<proteinExistence type="evidence at transcript level"/>
<keyword id="KW-0963">Cytoplasm</keyword>
<keyword id="KW-0413">Isomerase</keyword>
<keyword id="KW-1185">Reference proteome</keyword>
<keyword id="KW-0697">Rotamase</keyword>
<gene>
    <name type="primary">CYP</name>
    <name type="synonym">ROT1</name>
</gene>
<sequence length="172" mass="18349">MANPRVFFDMTVGGAPAGRIVMELYANEVPKTAENFRALCTGEKGVGKSGKPLHYKGSTFHRVIPEFMCQGGDFTRGNGTGGESIYGEKFPDEKFVRKQPAPGVLSMANAGPNTNGSQFFICTVATPWLDGKHVVFGQVVEGMDVVKAIEKVGTRNGSTSKVVKVADCGQLS</sequence>
<dbReference type="EC" id="5.2.1.8"/>
<dbReference type="EMBL" id="M55021">
    <property type="protein sequence ID" value="AAA63403.1"/>
    <property type="molecule type" value="mRNA"/>
</dbReference>
<dbReference type="EMBL" id="X68678">
    <property type="protein sequence ID" value="CAA48638.1"/>
    <property type="molecule type" value="Genomic_DNA"/>
</dbReference>
<dbReference type="PIR" id="C39252">
    <property type="entry name" value="CSZM"/>
</dbReference>
<dbReference type="SMR" id="P21569"/>
<dbReference type="FunCoup" id="P21569">
    <property type="interactions" value="1928"/>
</dbReference>
<dbReference type="STRING" id="4577.P21569"/>
<dbReference type="PaxDb" id="4577-GRMZM2G326111_P01"/>
<dbReference type="ProMEX" id="P21569"/>
<dbReference type="MaizeGDB" id="65166"/>
<dbReference type="eggNOG" id="KOG0865">
    <property type="taxonomic scope" value="Eukaryota"/>
</dbReference>
<dbReference type="InParanoid" id="P21569"/>
<dbReference type="Proteomes" id="UP000007305">
    <property type="component" value="Unplaced"/>
</dbReference>
<dbReference type="ExpressionAtlas" id="P21569">
    <property type="expression patterns" value="baseline and differential"/>
</dbReference>
<dbReference type="GO" id="GO:0005737">
    <property type="term" value="C:cytoplasm"/>
    <property type="evidence" value="ECO:0000318"/>
    <property type="project" value="GO_Central"/>
</dbReference>
<dbReference type="GO" id="GO:0005829">
    <property type="term" value="C:cytosol"/>
    <property type="evidence" value="ECO:0000315"/>
    <property type="project" value="AgBase"/>
</dbReference>
<dbReference type="GO" id="GO:0016018">
    <property type="term" value="F:cyclosporin A binding"/>
    <property type="evidence" value="ECO:0000315"/>
    <property type="project" value="AgBase"/>
</dbReference>
<dbReference type="GO" id="GO:0003755">
    <property type="term" value="F:peptidyl-prolyl cis-trans isomerase activity"/>
    <property type="evidence" value="ECO:0000314"/>
    <property type="project" value="AgBase"/>
</dbReference>
<dbReference type="GO" id="GO:0006457">
    <property type="term" value="P:protein folding"/>
    <property type="evidence" value="ECO:0000318"/>
    <property type="project" value="GO_Central"/>
</dbReference>
<dbReference type="CDD" id="cd01926">
    <property type="entry name" value="cyclophilin_ABH_like"/>
    <property type="match status" value="1"/>
</dbReference>
<dbReference type="FunFam" id="2.40.100.10:FF:000002">
    <property type="entry name" value="Peptidyl-prolyl cis-trans isomerase"/>
    <property type="match status" value="1"/>
</dbReference>
<dbReference type="Gene3D" id="2.40.100.10">
    <property type="entry name" value="Cyclophilin-like"/>
    <property type="match status" value="1"/>
</dbReference>
<dbReference type="InterPro" id="IPR029000">
    <property type="entry name" value="Cyclophilin-like_dom_sf"/>
</dbReference>
<dbReference type="InterPro" id="IPR024936">
    <property type="entry name" value="Cyclophilin-type_PPIase"/>
</dbReference>
<dbReference type="InterPro" id="IPR020892">
    <property type="entry name" value="Cyclophilin-type_PPIase_CS"/>
</dbReference>
<dbReference type="InterPro" id="IPR002130">
    <property type="entry name" value="Cyclophilin-type_PPIase_dom"/>
</dbReference>
<dbReference type="PANTHER" id="PTHR11071">
    <property type="entry name" value="PEPTIDYL-PROLYL CIS-TRANS ISOMERASE"/>
    <property type="match status" value="1"/>
</dbReference>
<dbReference type="PANTHER" id="PTHR11071:SF561">
    <property type="entry name" value="PEPTIDYL-PROLYL CIS-TRANS ISOMERASE D-RELATED"/>
    <property type="match status" value="1"/>
</dbReference>
<dbReference type="Pfam" id="PF00160">
    <property type="entry name" value="Pro_isomerase"/>
    <property type="match status" value="1"/>
</dbReference>
<dbReference type="PIRSF" id="PIRSF001467">
    <property type="entry name" value="Peptidylpro_ismrse"/>
    <property type="match status" value="1"/>
</dbReference>
<dbReference type="PRINTS" id="PR00153">
    <property type="entry name" value="CSAPPISMRASE"/>
</dbReference>
<dbReference type="SUPFAM" id="SSF50891">
    <property type="entry name" value="Cyclophilin-like"/>
    <property type="match status" value="1"/>
</dbReference>
<dbReference type="PROSITE" id="PS00170">
    <property type="entry name" value="CSA_PPIASE_1"/>
    <property type="match status" value="1"/>
</dbReference>
<dbReference type="PROSITE" id="PS50072">
    <property type="entry name" value="CSA_PPIASE_2"/>
    <property type="match status" value="1"/>
</dbReference>
<protein>
    <recommendedName>
        <fullName>Peptidyl-prolyl cis-trans isomerase</fullName>
        <shortName>PPIase</shortName>
        <ecNumber>5.2.1.8</ecNumber>
    </recommendedName>
    <alternativeName>
        <fullName>Cyclophilin</fullName>
    </alternativeName>
    <alternativeName>
        <fullName>Cyclosporin A-binding protein</fullName>
    </alternativeName>
    <alternativeName>
        <fullName>Rotamase</fullName>
    </alternativeName>
</protein>